<organism>
    <name type="scientific">Caenorhabditis elegans</name>
    <dbReference type="NCBI Taxonomy" id="6239"/>
    <lineage>
        <taxon>Eukaryota</taxon>
        <taxon>Metazoa</taxon>
        <taxon>Ecdysozoa</taxon>
        <taxon>Nematoda</taxon>
        <taxon>Chromadorea</taxon>
        <taxon>Rhabditida</taxon>
        <taxon>Rhabditina</taxon>
        <taxon>Rhabditomorpha</taxon>
        <taxon>Rhabditoidea</taxon>
        <taxon>Rhabditidae</taxon>
        <taxon>Peloderinae</taxon>
        <taxon>Caenorhabditis</taxon>
    </lineage>
</organism>
<keyword id="KW-0025">Alternative splicing</keyword>
<keyword id="KW-0433">Leucine-rich repeat</keyword>
<keyword id="KW-1185">Reference proteome</keyword>
<keyword id="KW-0677">Repeat</keyword>
<dbReference type="EMBL" id="AF068919">
    <property type="protein sequence ID" value="AAC39129.1"/>
    <property type="molecule type" value="mRNA"/>
</dbReference>
<dbReference type="EMBL" id="AF054827">
    <property type="protein sequence ID" value="AAC25697.1"/>
    <property type="molecule type" value="mRNA"/>
</dbReference>
<dbReference type="EMBL" id="FO080091">
    <property type="protein sequence ID" value="CCD61151.1"/>
    <property type="molecule type" value="Genomic_DNA"/>
</dbReference>
<dbReference type="EMBL" id="FO080091">
    <property type="protein sequence ID" value="CCD61152.1"/>
    <property type="molecule type" value="Genomic_DNA"/>
</dbReference>
<dbReference type="PIR" id="B88684">
    <property type="entry name" value="B88684"/>
</dbReference>
<dbReference type="PIR" id="T30947">
    <property type="entry name" value="T30947"/>
</dbReference>
<dbReference type="PIR" id="T42998">
    <property type="entry name" value="T42998"/>
</dbReference>
<dbReference type="RefSeq" id="NP_001021259.1">
    <molecule id="Q22875-1"/>
    <property type="nucleotide sequence ID" value="NM_001026088.5"/>
</dbReference>
<dbReference type="RefSeq" id="NP_741391.2">
    <molecule id="Q22875-2"/>
    <property type="nucleotide sequence ID" value="NM_171332.5"/>
</dbReference>
<dbReference type="SMR" id="Q22875"/>
<dbReference type="BioGRID" id="42412">
    <property type="interactions" value="5"/>
</dbReference>
<dbReference type="FunCoup" id="Q22875">
    <property type="interactions" value="1"/>
</dbReference>
<dbReference type="IntAct" id="Q22875">
    <property type="interactions" value="1"/>
</dbReference>
<dbReference type="MINT" id="Q22875"/>
<dbReference type="STRING" id="6239.AC7.2c.1"/>
<dbReference type="PaxDb" id="6239-AC7.2a.1"/>
<dbReference type="EnsemblMetazoa" id="AC7.2a.1">
    <molecule id="Q22875-1"/>
    <property type="protein sequence ID" value="AC7.2a.1"/>
    <property type="gene ID" value="WBGene00004929"/>
</dbReference>
<dbReference type="EnsemblMetazoa" id="AC7.2b.1">
    <molecule id="Q22875-2"/>
    <property type="protein sequence ID" value="AC7.2b.1"/>
    <property type="gene ID" value="WBGene00004929"/>
</dbReference>
<dbReference type="GeneID" id="177286"/>
<dbReference type="KEGG" id="cel:CELE_AC7.2"/>
<dbReference type="UCSC" id="AC7.2b">
    <property type="organism name" value="c. elegans"/>
</dbReference>
<dbReference type="AGR" id="WB:WBGene00004929"/>
<dbReference type="CTD" id="177286"/>
<dbReference type="WormBase" id="AC7.2a">
    <molecule id="Q22875-1"/>
    <property type="protein sequence ID" value="CE25736"/>
    <property type="gene ID" value="WBGene00004929"/>
    <property type="gene designation" value="soc-2"/>
</dbReference>
<dbReference type="WormBase" id="AC7.2b">
    <molecule id="Q22875-2"/>
    <property type="protein sequence ID" value="CE31275"/>
    <property type="gene ID" value="WBGene00004929"/>
    <property type="gene designation" value="soc-2"/>
</dbReference>
<dbReference type="eggNOG" id="KOG0619">
    <property type="taxonomic scope" value="Eukaryota"/>
</dbReference>
<dbReference type="HOGENOM" id="CLU_000288_18_23_1"/>
<dbReference type="InParanoid" id="Q22875"/>
<dbReference type="OMA" id="NQFTSYP"/>
<dbReference type="OrthoDB" id="676979at2759"/>
<dbReference type="PhylomeDB" id="Q22875"/>
<dbReference type="Reactome" id="R-CEL-5223345">
    <property type="pathway name" value="Miscellaneous transport and binding events"/>
</dbReference>
<dbReference type="Reactome" id="R-CEL-5673000">
    <property type="pathway name" value="RAF activation"/>
</dbReference>
<dbReference type="SignaLink" id="Q22875"/>
<dbReference type="PRO" id="PR:Q22875"/>
<dbReference type="Proteomes" id="UP000001940">
    <property type="component" value="Chromosome IV"/>
</dbReference>
<dbReference type="Bgee" id="WBGene00004929">
    <property type="expression patterns" value="Expressed in larva and 3 other cell types or tissues"/>
</dbReference>
<dbReference type="ExpressionAtlas" id="Q22875">
    <property type="expression patterns" value="baseline and differential"/>
</dbReference>
<dbReference type="GO" id="GO:0031267">
    <property type="term" value="F:small GTPase binding"/>
    <property type="evidence" value="ECO:0000353"/>
    <property type="project" value="WormBase"/>
</dbReference>
<dbReference type="GO" id="GO:0005225">
    <property type="term" value="F:volume-sensitive anion channel activity"/>
    <property type="evidence" value="ECO:0000318"/>
    <property type="project" value="GO_Central"/>
</dbReference>
<dbReference type="GO" id="GO:0008543">
    <property type="term" value="P:fibroblast growth factor receptor signaling pathway"/>
    <property type="evidence" value="ECO:0000316"/>
    <property type="project" value="WormBase"/>
</dbReference>
<dbReference type="GO" id="GO:0035556">
    <property type="term" value="P:intracellular signal transduction"/>
    <property type="evidence" value="ECO:0000318"/>
    <property type="project" value="GO_Central"/>
</dbReference>
<dbReference type="GO" id="GO:0007517">
    <property type="term" value="P:muscle organ development"/>
    <property type="evidence" value="ECO:0000315"/>
    <property type="project" value="WormBase"/>
</dbReference>
<dbReference type="GO" id="GO:0046579">
    <property type="term" value="P:positive regulation of Ras protein signal transduction"/>
    <property type="evidence" value="ECO:0000315"/>
    <property type="project" value="UniProtKB"/>
</dbReference>
<dbReference type="GO" id="GO:0031344">
    <property type="term" value="P:regulation of cell projection organization"/>
    <property type="evidence" value="ECO:0000315"/>
    <property type="project" value="WormBase"/>
</dbReference>
<dbReference type="GO" id="GO:0040025">
    <property type="term" value="P:vulval development"/>
    <property type="evidence" value="ECO:0000315"/>
    <property type="project" value="UniProtKB"/>
</dbReference>
<dbReference type="FunFam" id="3.80.10.10:FF:000031">
    <property type="entry name" value="leucine-rich repeat protein SHOC-2"/>
    <property type="match status" value="1"/>
</dbReference>
<dbReference type="FunFam" id="3.80.10.10:FF:000281">
    <property type="entry name" value="Leucine-rich repeat protein soc-2"/>
    <property type="match status" value="1"/>
</dbReference>
<dbReference type="FunFam" id="3.80.10.10:FF:000969">
    <property type="entry name" value="Leucine-rich repeat protein soc-2"/>
    <property type="match status" value="1"/>
</dbReference>
<dbReference type="FunFam" id="3.80.10.10:FF:001085">
    <property type="entry name" value="Leucine-rich repeat protein soc-2"/>
    <property type="match status" value="1"/>
</dbReference>
<dbReference type="Gene3D" id="3.80.10.10">
    <property type="entry name" value="Ribonuclease Inhibitor"/>
    <property type="match status" value="4"/>
</dbReference>
<dbReference type="InterPro" id="IPR001611">
    <property type="entry name" value="Leu-rich_rpt"/>
</dbReference>
<dbReference type="InterPro" id="IPR003591">
    <property type="entry name" value="Leu-rich_rpt_typical-subtyp"/>
</dbReference>
<dbReference type="InterPro" id="IPR050715">
    <property type="entry name" value="LRR-SigEffector_domain"/>
</dbReference>
<dbReference type="InterPro" id="IPR032675">
    <property type="entry name" value="LRR_dom_sf"/>
</dbReference>
<dbReference type="InterPro" id="IPR055414">
    <property type="entry name" value="LRR_R13L4/SHOC2-like"/>
</dbReference>
<dbReference type="PANTHER" id="PTHR45752:SF187">
    <property type="entry name" value="LEUCINE-RICH REPEAT AND IQ DOMAIN-CONTAINING PROTEIN 4"/>
    <property type="match status" value="1"/>
</dbReference>
<dbReference type="PANTHER" id="PTHR45752">
    <property type="entry name" value="LEUCINE-RICH REPEAT-CONTAINING"/>
    <property type="match status" value="1"/>
</dbReference>
<dbReference type="Pfam" id="PF00560">
    <property type="entry name" value="LRR_1"/>
    <property type="match status" value="1"/>
</dbReference>
<dbReference type="Pfam" id="PF23598">
    <property type="entry name" value="LRR_14"/>
    <property type="match status" value="1"/>
</dbReference>
<dbReference type="Pfam" id="PF13855">
    <property type="entry name" value="LRR_8"/>
    <property type="match status" value="2"/>
</dbReference>
<dbReference type="SMART" id="SM00364">
    <property type="entry name" value="LRR_BAC"/>
    <property type="match status" value="14"/>
</dbReference>
<dbReference type="SMART" id="SM00365">
    <property type="entry name" value="LRR_SD22"/>
    <property type="match status" value="7"/>
</dbReference>
<dbReference type="SMART" id="SM00369">
    <property type="entry name" value="LRR_TYP"/>
    <property type="match status" value="17"/>
</dbReference>
<dbReference type="SUPFAM" id="SSF52058">
    <property type="entry name" value="L domain-like"/>
    <property type="match status" value="2"/>
</dbReference>
<dbReference type="PROSITE" id="PS51450">
    <property type="entry name" value="LRR"/>
    <property type="match status" value="17"/>
</dbReference>
<feature type="chain" id="PRO_0000385631" description="Leucine-rich repeat protein soc-2">
    <location>
        <begin position="1"/>
        <end position="559"/>
    </location>
</feature>
<feature type="repeat" description="LRR 1">
    <location>
        <begin position="74"/>
        <end position="95"/>
    </location>
</feature>
<feature type="repeat" description="LRR 2">
    <location>
        <begin position="97"/>
        <end position="118"/>
    </location>
</feature>
<feature type="repeat" description="LRR 3">
    <location>
        <begin position="120"/>
        <end position="142"/>
    </location>
</feature>
<feature type="repeat" description="LRR 4">
    <location>
        <begin position="143"/>
        <end position="164"/>
    </location>
</feature>
<feature type="repeat" description="LRR 5">
    <location>
        <begin position="166"/>
        <end position="187"/>
    </location>
</feature>
<feature type="repeat" description="LRR 6">
    <location>
        <begin position="189"/>
        <end position="210"/>
    </location>
</feature>
<feature type="repeat" description="LRR 7">
    <location>
        <begin position="212"/>
        <end position="233"/>
    </location>
</feature>
<feature type="repeat" description="LRR 8">
    <location>
        <begin position="235"/>
        <end position="256"/>
    </location>
</feature>
<feature type="repeat" description="LRR 9">
    <location>
        <begin position="258"/>
        <end position="279"/>
    </location>
</feature>
<feature type="repeat" description="LRR 10">
    <location>
        <begin position="281"/>
        <end position="302"/>
    </location>
</feature>
<feature type="repeat" description="LRR 11">
    <location>
        <begin position="305"/>
        <end position="326"/>
    </location>
</feature>
<feature type="repeat" description="LRR 12">
    <location>
        <begin position="329"/>
        <end position="350"/>
    </location>
</feature>
<feature type="repeat" description="LRR 13">
    <location>
        <begin position="353"/>
        <end position="374"/>
    </location>
</feature>
<feature type="repeat" description="LRR 14">
    <location>
        <begin position="376"/>
        <end position="397"/>
    </location>
</feature>
<feature type="repeat" description="LRR 15">
    <location>
        <begin position="399"/>
        <end position="420"/>
    </location>
</feature>
<feature type="repeat" description="LRR 16">
    <location>
        <begin position="422"/>
        <end position="443"/>
    </location>
</feature>
<feature type="repeat" description="LRR 17">
    <location>
        <begin position="445"/>
        <end position="466"/>
    </location>
</feature>
<feature type="repeat" description="LRR 18">
    <location>
        <begin position="468"/>
        <end position="489"/>
    </location>
</feature>
<feature type="repeat" description="LRR 19">
    <location>
        <begin position="491"/>
        <end position="513"/>
    </location>
</feature>
<feature type="repeat" description="LRR 20">
    <location>
        <begin position="515"/>
        <end position="536"/>
    </location>
</feature>
<feature type="region of interest" description="Disordered" evidence="1">
    <location>
        <begin position="1"/>
        <end position="55"/>
    </location>
</feature>
<feature type="compositionally biased region" description="Basic and acidic residues" evidence="1">
    <location>
        <begin position="1"/>
        <end position="17"/>
    </location>
</feature>
<feature type="splice variant" id="VSP_038198" description="In isoform b." evidence="8">
    <original>METSKEFEFRPAKETSRSKSPGGIVGRLSNFARNKARHSLSEKGSNSVGGSGGAGFDKPR</original>
    <variation>MRVLQKLGFCLEKQKRETPPTTANTGVSATKRVSVIATDRDRAYFLRQKNMRNNKGHAE</variation>
    <location>
        <begin position="1"/>
        <end position="60"/>
    </location>
</feature>
<feature type="mutagenesis site" description="In ku242; suppresses an activated ras mutation and dramatically enhances phenotypes of mpk-1 MAP kinase and ksr-1 mutations. Abolishes interaction with let-60." evidence="7">
    <original>C</original>
    <variation>Y</variation>
    <location>
        <position position="233"/>
    </location>
</feature>
<feature type="mutagenesis site" description="In ku167; suppresses an activated ras mutation and dramatically enhances phenotypes of mpk-1 MAP kinase and ksr-1 mutations. Moderate increase in resistance to nicotine-induced paralysis." evidence="5 7">
    <original>E</original>
    <variation>K</variation>
    <location>
        <position position="430"/>
    </location>
</feature>
<evidence type="ECO:0000256" key="1">
    <source>
        <dbReference type="SAM" id="MobiDB-lite"/>
    </source>
</evidence>
<evidence type="ECO:0000269" key="2">
    <source>
    </source>
</evidence>
<evidence type="ECO:0000269" key="3">
    <source>
    </source>
</evidence>
<evidence type="ECO:0000269" key="4">
    <source>
    </source>
</evidence>
<evidence type="ECO:0000269" key="5">
    <source>
    </source>
</evidence>
<evidence type="ECO:0000269" key="6">
    <source>
    </source>
</evidence>
<evidence type="ECO:0000269" key="7">
    <source>
    </source>
</evidence>
<evidence type="ECO:0000305" key="8"/>
<gene>
    <name type="primary">soc-2</name>
    <name type="synonym">sur-8</name>
    <name type="ORF">AC7.2</name>
</gene>
<accession>Q22875</accession>
<accession>O77472</accession>
<accession>Q8MPP6</accession>
<proteinExistence type="evidence at protein level"/>
<name>SHOC2_CAEEL</name>
<sequence length="559" mass="62483">METSKEFEFRPAKETSRSKSPGGIVGRLSNFARNKARHSLSEKGSNSVGGSGGAGFDKPRKDLLKEFHKCKEAQDQRLDLSSIEITSIPSPIKELTQLTELFLYKNKLTCLPTEIGQLVNLKKLGLSENALTSLPDSLASLESLETLDLRHNKLTEVPSVIYKIGSLETLWLRYNRIVAVDEQIGNLSKLKMLDVRENKIRELPSAIGKLTSLVVCLVSYNHLTRVPEEIGDCHSLTQLDLQHNDLSELPYSIGKLVNLVRIGIRYNKIRCIPSELESCQQLEEFIVESNHLQLLPPNLLTMLPKIHTVNLSRNELTAFPAGGPQQFVSTVTINMEHNQISKIPIGIFSKATRLTKLNLKENELVSLPLDMGSWTSITELNLSTNQLKVLPEDIEKLVNLEILVLSNNQLKKLPNQIGNLNKLRELDLEENELETVPTEIGFLQHLTKLWVQSNKILTLPRSIGNLCSLQDLRLGENNLTAIPEEIGHLDSLKSLYLNDNSSLHNLPFELALCQSLEIMSIENSPLSQIPPEITAGGPSLVIQYLKMQGPYRGVVMNSQ</sequence>
<protein>
    <recommendedName>
        <fullName>Leucine-rich repeat protein soc-2</fullName>
    </recommendedName>
    <alternativeName>
        <fullName>Suppressor of Clr protein 2</fullName>
    </alternativeName>
    <alternativeName>
        <fullName>Suppressor of activated let-60 Ras protein 8</fullName>
    </alternativeName>
</protein>
<comment type="function">
    <text evidence="2 3 4 5 6 7">Acts as a Ras effector and participates in MAPK pathway activation (PubMed:9618511, PubMed:9674433). Probably acts as a scaffolding protein in a protein phosphatase complex that specifically dephosphorylates Raf kinase and stimulates Raf activity at specialized signaling complexes upon Ras activation (PubMed:10521400, PubMed:14685271). Required for vulval development (PubMed:10521400). Involved in fluid homeostasis (PubMed:11689700). Plays a role in nicotinic acetylcholine receptor (nAChR)-mediated sensitivity to nicotine (PubMed:15990870).</text>
</comment>
<comment type="subunit">
    <text evidence="7">Interacts with let-60.</text>
</comment>
<comment type="alternative products">
    <event type="alternative splicing"/>
    <isoform>
        <id>Q22875-1</id>
        <name>a</name>
        <sequence type="displayed"/>
    </isoform>
    <isoform>
        <id>Q22875-2</id>
        <name>b</name>
        <sequence type="described" ref="VSP_038198"/>
    </isoform>
</comment>
<comment type="similarity">
    <text evidence="8">Belongs to the SHOC2 family.</text>
</comment>
<reference key="1">
    <citation type="journal article" date="1998" name="Cell">
        <title>SUR-8, a conserved Ras-binding protein with leucine-rich repeats, positively regulates Ras-mediated signaling in C. elegans.</title>
        <authorList>
            <person name="Sieburth D.S."/>
            <person name="Sun Q."/>
            <person name="Han M."/>
        </authorList>
    </citation>
    <scope>NUCLEOTIDE SEQUENCE [MRNA] (ISOFORM A)</scope>
    <scope>FUNCTION</scope>
    <scope>INTERACTION WITH LET-60</scope>
    <scope>MUTAGENESIS OF CYS-233 AND GLU-430</scope>
    <source>
        <tissue>Vulva</tissue>
    </source>
</reference>
<reference key="2">
    <citation type="journal article" date="1998" name="Proc. Natl. Acad. Sci. U.S.A.">
        <title>Soc-2 encodes a leucine-rich repeat protein implicated in fibroblast growth factor receptor signaling.</title>
        <authorList>
            <person name="Selfors L.M."/>
            <person name="Schutzman J.L."/>
            <person name="Borland C.Z."/>
            <person name="Stern M.J."/>
        </authorList>
    </citation>
    <scope>NUCLEOTIDE SEQUENCE [MRNA] (ISOFORM A)</scope>
    <scope>FUNCTION</scope>
    <source>
        <strain>Bristol N2</strain>
    </source>
</reference>
<reference key="3">
    <citation type="journal article" date="1998" name="Science">
        <title>Genome sequence of the nematode C. elegans: a platform for investigating biology.</title>
        <authorList>
            <consortium name="The C. elegans sequencing consortium"/>
        </authorList>
    </citation>
    <scope>NUCLEOTIDE SEQUENCE [LARGE SCALE GENOMIC DNA]</scope>
    <scope>ALTERNATIVE SPLICING (ISOFORMS A AND B)</scope>
    <source>
        <strain>Bristol N2</strain>
    </source>
</reference>
<reference key="4">
    <citation type="journal article" date="1999" name="Genes Dev.">
        <title>A PP2A regulatory subunit positively regulates Ras-mediated signaling during Caenorhabditis elegans vulval induction.</title>
        <authorList>
            <person name="Sieburth D.S."/>
            <person name="Sundaram M."/>
            <person name="Howard R.M."/>
            <person name="Han M."/>
        </authorList>
    </citation>
    <scope>FUNCTION</scope>
</reference>
<reference key="5">
    <citation type="journal article" date="2001" name="Mol. Cell. Biol.">
        <title>The Caenorhabditis elegans EGL-15 signaling pathway implicates a DOS-like multisubstrate adaptor protein in fibroblast growth factor signal transduction.</title>
        <authorList>
            <person name="Schutzman J.L."/>
            <person name="Borland C.Z."/>
            <person name="Newman J.C."/>
            <person name="Robinson M.K."/>
            <person name="Kokel M."/>
            <person name="Stern M.J."/>
        </authorList>
    </citation>
    <scope>FUNCTION</scope>
    <source>
        <strain>Bristol N2</strain>
    </source>
</reference>
<reference key="6">
    <citation type="journal article" date="2004" name="EMBO J.">
        <title>Modulation of KSR activity in Caenorhabditis elegans by Zn ions, PAR-1 kinase and PP2A phosphatase.</title>
        <authorList>
            <person name="Yoder J.H."/>
            <person name="Chong H."/>
            <person name="Guan K.-L."/>
            <person name="Han M."/>
        </authorList>
    </citation>
    <scope>FUNCTION</scope>
</reference>
<reference key="7">
    <citation type="journal article" date="2005" name="EMBO J.">
        <title>Identification and characterization of novel nicotinic receptor-associated proteins in Caenorhabditis elegans.</title>
        <authorList>
            <person name="Gottschalk A."/>
            <person name="Almedom R.B."/>
            <person name="Schedletzky T."/>
            <person name="Anderson S.D."/>
            <person name="Yates J.R. III"/>
            <person name="Schafer W.R."/>
        </authorList>
    </citation>
    <scope>FUNCTION</scope>
    <scope>MUTAGENESIS OF GLU-430</scope>
</reference>